<protein>
    <recommendedName>
        <fullName evidence="1">Cell division protein ZipA</fullName>
    </recommendedName>
</protein>
<sequence>MMQDLRLILIIVGAIAIIALLVHGFWTSRKERSSMFRDRPLKRMKSKRDDDSYDEDVEDDEGVGEVRVHRVNHAPANAQEHEAARPSPQHQYQPPYASAQPRQPVQQPPEAQVPPQHAPHPAQPVQQPAYQPQPEQPLQQPVSPQVAPAPQPVHSAPQPAQQAFQPAEPVAAPQPEPVAEPAPVMDKPKRKEAVIIMNVAAHHGSELNGELLLNSIQQAGFIFGDMNIYHRHLSPDGSGPALFSLANMVKPGTFDPEMKDFTTPGVTIFMQVPSYGDELQNFKLMLQSAQHIADEVGGVVLDDQRRMMTPQKLREYQDIIREVKDANA</sequence>
<comment type="function">
    <text evidence="1">Essential cell division protein that stabilizes the FtsZ protofilaments by cross-linking them and that serves as a cytoplasmic membrane anchor for the Z ring. Also required for the recruitment to the septal ring of downstream cell division proteins.</text>
</comment>
<comment type="subunit">
    <text evidence="1">Interacts with FtsZ via their C-terminal domains.</text>
</comment>
<comment type="subcellular location">
    <subcellularLocation>
        <location evidence="1">Cell inner membrane</location>
        <topology evidence="1">Single-pass type I membrane protein</topology>
    </subcellularLocation>
    <text evidence="1">Localizes to the Z ring in an FtsZ-dependent manner.</text>
</comment>
<comment type="similarity">
    <text evidence="1">Belongs to the ZipA family.</text>
</comment>
<gene>
    <name evidence="1" type="primary">zipA</name>
    <name type="ordered locus">ECDH10B_2577</name>
</gene>
<proteinExistence type="inferred from homology"/>
<accession>B1XA83</accession>
<keyword id="KW-0131">Cell cycle</keyword>
<keyword id="KW-0132">Cell division</keyword>
<keyword id="KW-0997">Cell inner membrane</keyword>
<keyword id="KW-1003">Cell membrane</keyword>
<keyword id="KW-0472">Membrane</keyword>
<keyword id="KW-0812">Transmembrane</keyword>
<keyword id="KW-1133">Transmembrane helix</keyword>
<feature type="chain" id="PRO_1000127218" description="Cell division protein ZipA">
    <location>
        <begin position="1"/>
        <end position="328"/>
    </location>
</feature>
<feature type="topological domain" description="Periplasmic" evidence="1">
    <location>
        <begin position="1"/>
        <end position="6"/>
    </location>
</feature>
<feature type="transmembrane region" description="Helical" evidence="1">
    <location>
        <begin position="7"/>
        <end position="27"/>
    </location>
</feature>
<feature type="topological domain" description="Cytoplasmic" evidence="1">
    <location>
        <begin position="28"/>
        <end position="328"/>
    </location>
</feature>
<feature type="region of interest" description="Disordered" evidence="2">
    <location>
        <begin position="42"/>
        <end position="186"/>
    </location>
</feature>
<feature type="compositionally biased region" description="Acidic residues" evidence="2">
    <location>
        <begin position="51"/>
        <end position="63"/>
    </location>
</feature>
<feature type="compositionally biased region" description="Low complexity" evidence="2">
    <location>
        <begin position="97"/>
        <end position="115"/>
    </location>
</feature>
<feature type="compositionally biased region" description="Low complexity" evidence="2">
    <location>
        <begin position="123"/>
        <end position="171"/>
    </location>
</feature>
<name>ZIPA_ECODH</name>
<evidence type="ECO:0000255" key="1">
    <source>
        <dbReference type="HAMAP-Rule" id="MF_00509"/>
    </source>
</evidence>
<evidence type="ECO:0000256" key="2">
    <source>
        <dbReference type="SAM" id="MobiDB-lite"/>
    </source>
</evidence>
<reference key="1">
    <citation type="journal article" date="2008" name="J. Bacteriol.">
        <title>The complete genome sequence of Escherichia coli DH10B: insights into the biology of a laboratory workhorse.</title>
        <authorList>
            <person name="Durfee T."/>
            <person name="Nelson R."/>
            <person name="Baldwin S."/>
            <person name="Plunkett G. III"/>
            <person name="Burland V."/>
            <person name="Mau B."/>
            <person name="Petrosino J.F."/>
            <person name="Qin X."/>
            <person name="Muzny D.M."/>
            <person name="Ayele M."/>
            <person name="Gibbs R.A."/>
            <person name="Csorgo B."/>
            <person name="Posfai G."/>
            <person name="Weinstock G.M."/>
            <person name="Blattner F.R."/>
        </authorList>
    </citation>
    <scope>NUCLEOTIDE SEQUENCE [LARGE SCALE GENOMIC DNA]</scope>
    <source>
        <strain>K12 / DH10B</strain>
    </source>
</reference>
<dbReference type="EMBL" id="CP000948">
    <property type="protein sequence ID" value="ACB03563.1"/>
    <property type="molecule type" value="Genomic_DNA"/>
</dbReference>
<dbReference type="RefSeq" id="WP_001300494.1">
    <property type="nucleotide sequence ID" value="NC_010473.1"/>
</dbReference>
<dbReference type="SMR" id="B1XA83"/>
<dbReference type="KEGG" id="ecd:ECDH10B_2577"/>
<dbReference type="HOGENOM" id="CLU_030174_1_0_6"/>
<dbReference type="GO" id="GO:0032153">
    <property type="term" value="C:cell division site"/>
    <property type="evidence" value="ECO:0007669"/>
    <property type="project" value="UniProtKB-UniRule"/>
</dbReference>
<dbReference type="GO" id="GO:0005886">
    <property type="term" value="C:plasma membrane"/>
    <property type="evidence" value="ECO:0007669"/>
    <property type="project" value="UniProtKB-SubCell"/>
</dbReference>
<dbReference type="GO" id="GO:0000917">
    <property type="term" value="P:division septum assembly"/>
    <property type="evidence" value="ECO:0007669"/>
    <property type="project" value="TreeGrafter"/>
</dbReference>
<dbReference type="GO" id="GO:0043093">
    <property type="term" value="P:FtsZ-dependent cytokinesis"/>
    <property type="evidence" value="ECO:0007669"/>
    <property type="project" value="UniProtKB-UniRule"/>
</dbReference>
<dbReference type="CDD" id="cd00231">
    <property type="entry name" value="ZipA"/>
    <property type="match status" value="1"/>
</dbReference>
<dbReference type="FunFam" id="3.30.1400.10:FF:000001">
    <property type="entry name" value="Cell division protein ZipA"/>
    <property type="match status" value="1"/>
</dbReference>
<dbReference type="Gene3D" id="3.30.1400.10">
    <property type="entry name" value="ZipA, C-terminal FtsZ-binding domain"/>
    <property type="match status" value="1"/>
</dbReference>
<dbReference type="HAMAP" id="MF_00509">
    <property type="entry name" value="ZipA"/>
    <property type="match status" value="1"/>
</dbReference>
<dbReference type="InterPro" id="IPR011919">
    <property type="entry name" value="Cell_div_ZipA"/>
</dbReference>
<dbReference type="InterPro" id="IPR007449">
    <property type="entry name" value="ZipA_FtsZ-bd_C"/>
</dbReference>
<dbReference type="InterPro" id="IPR036765">
    <property type="entry name" value="ZipA_FtsZ-bd_C_sf"/>
</dbReference>
<dbReference type="NCBIfam" id="TIGR02205">
    <property type="entry name" value="septum_zipA"/>
    <property type="match status" value="1"/>
</dbReference>
<dbReference type="PANTHER" id="PTHR38685">
    <property type="entry name" value="CELL DIVISION PROTEIN ZIPA"/>
    <property type="match status" value="1"/>
</dbReference>
<dbReference type="PANTHER" id="PTHR38685:SF1">
    <property type="entry name" value="CELL DIVISION PROTEIN ZIPA"/>
    <property type="match status" value="1"/>
</dbReference>
<dbReference type="Pfam" id="PF04354">
    <property type="entry name" value="ZipA_C"/>
    <property type="match status" value="1"/>
</dbReference>
<dbReference type="SMART" id="SM00771">
    <property type="entry name" value="ZipA_C"/>
    <property type="match status" value="1"/>
</dbReference>
<dbReference type="SUPFAM" id="SSF64383">
    <property type="entry name" value="Cell-division protein ZipA, C-terminal domain"/>
    <property type="match status" value="1"/>
</dbReference>
<organism>
    <name type="scientific">Escherichia coli (strain K12 / DH10B)</name>
    <dbReference type="NCBI Taxonomy" id="316385"/>
    <lineage>
        <taxon>Bacteria</taxon>
        <taxon>Pseudomonadati</taxon>
        <taxon>Pseudomonadota</taxon>
        <taxon>Gammaproteobacteria</taxon>
        <taxon>Enterobacterales</taxon>
        <taxon>Enterobacteriaceae</taxon>
        <taxon>Escherichia</taxon>
    </lineage>
</organism>